<comment type="function">
    <text evidence="3">Hydrolyzes 6-sulfate groups in N-acetyl-d-glucosaminide units of heparin sulfate and keratan sulfate.</text>
</comment>
<comment type="catalytic activity">
    <reaction evidence="3">
        <text>Hydrolysis of the 6-sulfate groups of the N-acetyl-D-glucosamine 6-sulfate units of heparan sulfate and keratan sulfate.</text>
        <dbReference type="EC" id="3.1.6.14"/>
    </reaction>
</comment>
<comment type="cofactor">
    <cofactor evidence="2">
        <name>Ca(2+)</name>
        <dbReference type="ChEBI" id="CHEBI:29108"/>
    </cofactor>
    <text evidence="2">Binds 1 Ca(2+) ion per subunit.</text>
</comment>
<comment type="subcellular location">
    <subcellularLocation>
        <location>Lysosome</location>
    </subcellularLocation>
</comment>
<comment type="PTM">
    <text evidence="1">Processed by internal peptidase.</text>
</comment>
<comment type="PTM">
    <text evidence="1">The conversion to 3-oxoalanine (also known as C-formylglycine, FGly), of a serine or cysteine residue in prokaryotes and of a cysteine residue in eukaryotes, is critical for catalytic activity.</text>
</comment>
<comment type="similarity">
    <text evidence="6">Belongs to the sulfatase family.</text>
</comment>
<protein>
    <recommendedName>
        <fullName>N-acetylglucosamine-6-sulfatase</fullName>
        <ecNumber evidence="3">3.1.6.14</ecNumber>
    </recommendedName>
    <alternativeName>
        <fullName>Glucosamine-6-sulfatase</fullName>
        <shortName>G6S</shortName>
    </alternativeName>
</protein>
<evidence type="ECO:0000250" key="1"/>
<evidence type="ECO:0000250" key="2">
    <source>
        <dbReference type="UniProtKB" id="P15289"/>
    </source>
</evidence>
<evidence type="ECO:0000250" key="3">
    <source>
        <dbReference type="UniProtKB" id="P15586"/>
    </source>
</evidence>
<evidence type="ECO:0000255" key="4"/>
<evidence type="ECO:0000256" key="5">
    <source>
        <dbReference type="SAM" id="MobiDB-lite"/>
    </source>
</evidence>
<evidence type="ECO:0000305" key="6"/>
<keyword id="KW-0106">Calcium</keyword>
<keyword id="KW-0325">Glycoprotein</keyword>
<keyword id="KW-0378">Hydrolase</keyword>
<keyword id="KW-0458">Lysosome</keyword>
<keyword id="KW-0479">Metal-binding</keyword>
<keyword id="KW-0510">Mucopolysaccharidosis</keyword>
<keyword id="KW-0597">Phosphoprotein</keyword>
<keyword id="KW-1185">Reference proteome</keyword>
<keyword id="KW-0732">Signal</keyword>
<name>GNS_CAPHI</name>
<dbReference type="EC" id="3.1.6.14" evidence="3"/>
<dbReference type="EMBL" id="U17694">
    <property type="protein sequence ID" value="AAB01663.1"/>
    <property type="molecule type" value="mRNA"/>
</dbReference>
<dbReference type="RefSeq" id="NP_001272619.1">
    <property type="nucleotide sequence ID" value="NM_001285690.1"/>
</dbReference>
<dbReference type="SMR" id="P50426"/>
<dbReference type="STRING" id="9925.ENSCHIP00000010847"/>
<dbReference type="GlyCosmos" id="P50426">
    <property type="glycosylation" value="13 sites, No reported glycans"/>
</dbReference>
<dbReference type="GeneID" id="100750233"/>
<dbReference type="KEGG" id="chx:100750233"/>
<dbReference type="CTD" id="2799"/>
<dbReference type="OrthoDB" id="96314at2759"/>
<dbReference type="Proteomes" id="UP000291000">
    <property type="component" value="Unassembled WGS sequence"/>
</dbReference>
<dbReference type="Proteomes" id="UP000694566">
    <property type="component" value="Unplaced"/>
</dbReference>
<dbReference type="GO" id="GO:0005764">
    <property type="term" value="C:lysosome"/>
    <property type="evidence" value="ECO:0007669"/>
    <property type="project" value="UniProtKB-SubCell"/>
</dbReference>
<dbReference type="GO" id="GO:0005539">
    <property type="term" value="F:glycosaminoglycan binding"/>
    <property type="evidence" value="ECO:0007669"/>
    <property type="project" value="TreeGrafter"/>
</dbReference>
<dbReference type="GO" id="GO:0046872">
    <property type="term" value="F:metal ion binding"/>
    <property type="evidence" value="ECO:0007669"/>
    <property type="project" value="UniProtKB-KW"/>
</dbReference>
<dbReference type="GO" id="GO:0008449">
    <property type="term" value="F:N-acetylglucosamine-6-sulfatase activity"/>
    <property type="evidence" value="ECO:0007669"/>
    <property type="project" value="UniProtKB-EC"/>
</dbReference>
<dbReference type="GO" id="GO:0030203">
    <property type="term" value="P:glycosaminoglycan metabolic process"/>
    <property type="evidence" value="ECO:0007669"/>
    <property type="project" value="InterPro"/>
</dbReference>
<dbReference type="CDD" id="cd16147">
    <property type="entry name" value="G6S"/>
    <property type="match status" value="1"/>
</dbReference>
<dbReference type="FunFam" id="3.40.720.10:FF:000012">
    <property type="entry name" value="N-acetylglucosamine-6-sulfatase"/>
    <property type="match status" value="1"/>
</dbReference>
<dbReference type="Gene3D" id="3.40.720.10">
    <property type="entry name" value="Alkaline Phosphatase, subunit A"/>
    <property type="match status" value="1"/>
</dbReference>
<dbReference type="InterPro" id="IPR017850">
    <property type="entry name" value="Alkaline_phosphatase_core_sf"/>
</dbReference>
<dbReference type="InterPro" id="IPR012251">
    <property type="entry name" value="GlcNAc_6-SO4ase"/>
</dbReference>
<dbReference type="InterPro" id="IPR024607">
    <property type="entry name" value="Sulfatase_CS"/>
</dbReference>
<dbReference type="InterPro" id="IPR000917">
    <property type="entry name" value="Sulfatase_N"/>
</dbReference>
<dbReference type="PANTHER" id="PTHR43108:SF5">
    <property type="entry name" value="N-ACETYLGLUCOSAMINE-6-SULFATASE"/>
    <property type="match status" value="1"/>
</dbReference>
<dbReference type="PANTHER" id="PTHR43108">
    <property type="entry name" value="N-ACETYLGLUCOSAMINE-6-SULFATASE FAMILY MEMBER"/>
    <property type="match status" value="1"/>
</dbReference>
<dbReference type="Pfam" id="PF00884">
    <property type="entry name" value="Sulfatase"/>
    <property type="match status" value="1"/>
</dbReference>
<dbReference type="PIRSF" id="PIRSF036666">
    <property type="entry name" value="G6S"/>
    <property type="match status" value="1"/>
</dbReference>
<dbReference type="SUPFAM" id="SSF53649">
    <property type="entry name" value="Alkaline phosphatase-like"/>
    <property type="match status" value="1"/>
</dbReference>
<dbReference type="PROSITE" id="PS00523">
    <property type="entry name" value="SULFATASE_1"/>
    <property type="match status" value="1"/>
</dbReference>
<dbReference type="PROSITE" id="PS00149">
    <property type="entry name" value="SULFATASE_2"/>
    <property type="match status" value="1"/>
</dbReference>
<organism>
    <name type="scientific">Capra hircus</name>
    <name type="common">Goat</name>
    <dbReference type="NCBI Taxonomy" id="9925"/>
    <lineage>
        <taxon>Eukaryota</taxon>
        <taxon>Metazoa</taxon>
        <taxon>Chordata</taxon>
        <taxon>Craniata</taxon>
        <taxon>Vertebrata</taxon>
        <taxon>Euteleostomi</taxon>
        <taxon>Mammalia</taxon>
        <taxon>Eutheria</taxon>
        <taxon>Laurasiatheria</taxon>
        <taxon>Artiodactyla</taxon>
        <taxon>Ruminantia</taxon>
        <taxon>Pecora</taxon>
        <taxon>Bovidae</taxon>
        <taxon>Caprinae</taxon>
        <taxon>Capra</taxon>
    </lineage>
</organism>
<accession>P50426</accession>
<gene>
    <name type="primary">GNS</name>
</gene>
<reference key="1">
    <citation type="journal article" date="1995" name="Biochim. Biophys. Acta">
        <title>Cloning and sequence analysis of caprine N-acetylglucosamine 6-sulfatase cDNA.</title>
        <authorList>
            <person name="Friderici K."/>
            <person name="Cavanagh K.T."/>
            <person name="Leipprandt J.R."/>
            <person name="Traviss C.E."/>
            <person name="Anson D.S."/>
            <person name="Hopwood J.J."/>
            <person name="Jones M.Z."/>
        </authorList>
    </citation>
    <scope>NUCLEOTIDE SEQUENCE [MRNA]</scope>
</reference>
<feature type="signal peptide" evidence="4">
    <location>
        <begin position="1"/>
        <end position="47"/>
    </location>
</feature>
<feature type="chain" id="PRO_0000033412" description="N-acetylglucosamine-6-sulfatase">
    <location>
        <begin position="48"/>
        <end position="559"/>
    </location>
</feature>
<feature type="region of interest" description="Disordered" evidence="5">
    <location>
        <begin position="1"/>
        <end position="26"/>
    </location>
</feature>
<feature type="active site" description="Nucleophile" evidence="2">
    <location>
        <position position="98"/>
    </location>
</feature>
<feature type="binding site" evidence="2">
    <location>
        <position position="62"/>
    </location>
    <ligand>
        <name>Ca(2+)</name>
        <dbReference type="ChEBI" id="CHEBI:29108"/>
    </ligand>
</feature>
<feature type="binding site" evidence="2">
    <location>
        <position position="63"/>
    </location>
    <ligand>
        <name>Ca(2+)</name>
        <dbReference type="ChEBI" id="CHEBI:29108"/>
    </ligand>
</feature>
<feature type="binding site" description="via 3-oxoalanine" evidence="2">
    <location>
        <position position="98"/>
    </location>
    <ligand>
        <name>Ca(2+)</name>
        <dbReference type="ChEBI" id="CHEBI:29108"/>
    </ligand>
</feature>
<feature type="binding site" evidence="2">
    <location>
        <position position="333"/>
    </location>
    <ligand>
        <name>Ca(2+)</name>
        <dbReference type="ChEBI" id="CHEBI:29108"/>
    </ligand>
</feature>
<feature type="binding site" evidence="2">
    <location>
        <position position="334"/>
    </location>
    <ligand>
        <name>Ca(2+)</name>
        <dbReference type="ChEBI" id="CHEBI:29108"/>
    </ligand>
</feature>
<feature type="modified residue" description="3-oxoalanine (Cys)" evidence="2">
    <location>
        <position position="98"/>
    </location>
</feature>
<feature type="modified residue" description="Phosphoserine" evidence="3">
    <location>
        <position position="548"/>
    </location>
</feature>
<feature type="glycosylation site" description="N-linked (GlcNAc...) asparagine" evidence="4">
    <location>
        <position position="118"/>
    </location>
</feature>
<feature type="glycosylation site" description="N-linked (GlcNAc...) asparagine" evidence="4">
    <location>
        <position position="124"/>
    </location>
</feature>
<feature type="glycosylation site" description="N-linked (GlcNAc...) asparagine" evidence="4">
    <location>
        <position position="190"/>
    </location>
</feature>
<feature type="glycosylation site" description="N-linked (GlcNAc...) asparagine" evidence="4">
    <location>
        <position position="205"/>
    </location>
</feature>
<feature type="glycosylation site" description="N-linked (GlcNAc...) asparagine" evidence="4">
    <location>
        <position position="217"/>
    </location>
</feature>
<feature type="glycosylation site" description="N-linked (GlcNAc...) asparagine" evidence="4">
    <location>
        <position position="286"/>
    </location>
</feature>
<feature type="glycosylation site" description="N-linked (GlcNAc...) asparagine" evidence="4">
    <location>
        <position position="324"/>
    </location>
</feature>
<feature type="glycosylation site" description="N-linked (GlcNAc...) asparagine" evidence="4">
    <location>
        <position position="369"/>
    </location>
</feature>
<feature type="glycosylation site" description="N-linked (GlcNAc...) asparagine" evidence="4">
    <location>
        <position position="394"/>
    </location>
</feature>
<feature type="glycosylation site" description="N-linked (GlcNAc...) asparagine" evidence="4">
    <location>
        <position position="412"/>
    </location>
</feature>
<feature type="glycosylation site" description="N-linked (GlcNAc...) asparagine" evidence="4">
    <location>
        <position position="429"/>
    </location>
</feature>
<feature type="glycosylation site" description="N-linked (GlcNAc...) asparagine" evidence="4">
    <location>
        <position position="456"/>
    </location>
</feature>
<feature type="glycosylation site" description="N-linked (GlcNAc...) asparagine" evidence="4">
    <location>
        <position position="487"/>
    </location>
</feature>
<sequence>MRFLSLAPDRPRRGGPRHLPSGSPAPPPPPPLLLLLLLGGCLGVSGAAKGSRRPNVVLVLADDQDEVLGGMTPLKKTKALIGEMGMTFSSAYVPSALCCPSRASILTGKYPHNHHVVNNTLEGNCSSKSWQKIQEPNTFPAILRSMCGYQTFFAGKYLNEYGAPDAGGLGHVPLGWSYWYALEKNSKYYNYTLSINGKARKHGENYSVDYLTDVLANVSLDFLDYKSNSEPFFMMISTPAPHSPWTAAPQYQNAFQNVFAPRNKNFNIHGTNKHWLIRQAKTPMTNSSIQFLDNAFRERWQTLLSVDDLVEKLVKRLEFNGELNNTYIFYTSDNGYHTGQFSLPIDKRQLYEFDIKVPLLVRGPGIKPNQTSKMLVANIDLGPTILDIAGYGLNKTQMDGMSFLPILRGASNLTWRSDVLVEYQGEGRNVTDPTCPSLSPGVSQCFPDCVCEDAYNNTYACVRTMSELWNLQYCEFDDQEVFVEVYNLTADPHQLNNIAKSIDPELLGKMNYRLMMLQSCSGPTCRTPRVFDPGYRFDPRLMFSNHGSVRTRRFSKHLL</sequence>
<proteinExistence type="evidence at transcript level"/>